<dbReference type="EMBL" id="DS480449">
    <property type="protein sequence ID" value="EDO15682.1"/>
    <property type="status" value="ALT_SEQ"/>
    <property type="molecule type" value="Genomic_DNA"/>
</dbReference>
<dbReference type="RefSeq" id="XP_001643540.1">
    <property type="nucleotide sequence ID" value="XM_001643490.1"/>
</dbReference>
<dbReference type="SMR" id="A7TPY4"/>
<dbReference type="FunCoup" id="A7TPY4">
    <property type="interactions" value="570"/>
</dbReference>
<dbReference type="STRING" id="436907.A7TPY4"/>
<dbReference type="GeneID" id="5543781"/>
<dbReference type="KEGG" id="vpo:Kpol_1008p20"/>
<dbReference type="eggNOG" id="KOG2110">
    <property type="taxonomic scope" value="Eukaryota"/>
</dbReference>
<dbReference type="HOGENOM" id="CLU_025895_5_2_1"/>
<dbReference type="InParanoid" id="A7TPY4"/>
<dbReference type="OrthoDB" id="1667587at2759"/>
<dbReference type="Proteomes" id="UP000000267">
    <property type="component" value="Unassembled WGS sequence"/>
</dbReference>
<dbReference type="GO" id="GO:0010008">
    <property type="term" value="C:endosome membrane"/>
    <property type="evidence" value="ECO:0007669"/>
    <property type="project" value="UniProtKB-SubCell"/>
</dbReference>
<dbReference type="GO" id="GO:0034045">
    <property type="term" value="C:phagophore assembly site membrane"/>
    <property type="evidence" value="ECO:0007669"/>
    <property type="project" value="UniProtKB-SubCell"/>
</dbReference>
<dbReference type="GO" id="GO:0005774">
    <property type="term" value="C:vacuolar membrane"/>
    <property type="evidence" value="ECO:0007669"/>
    <property type="project" value="UniProtKB-SubCell"/>
</dbReference>
<dbReference type="GO" id="GO:0006914">
    <property type="term" value="P:autophagy"/>
    <property type="evidence" value="ECO:0007669"/>
    <property type="project" value="UniProtKB-KW"/>
</dbReference>
<dbReference type="GO" id="GO:0015031">
    <property type="term" value="P:protein transport"/>
    <property type="evidence" value="ECO:0007669"/>
    <property type="project" value="UniProtKB-KW"/>
</dbReference>
<dbReference type="Gene3D" id="2.130.10.10">
    <property type="entry name" value="YVTN repeat-like/Quinoprotein amine dehydrogenase"/>
    <property type="match status" value="1"/>
</dbReference>
<dbReference type="InterPro" id="IPR048720">
    <property type="entry name" value="PROPPIN"/>
</dbReference>
<dbReference type="InterPro" id="IPR015943">
    <property type="entry name" value="WD40/YVTN_repeat-like_dom_sf"/>
</dbReference>
<dbReference type="InterPro" id="IPR036322">
    <property type="entry name" value="WD40_repeat_dom_sf"/>
</dbReference>
<dbReference type="InterPro" id="IPR001680">
    <property type="entry name" value="WD40_rpt"/>
</dbReference>
<dbReference type="PANTHER" id="PTHR11227">
    <property type="entry name" value="WD-REPEAT PROTEIN INTERACTING WITH PHOSPHOINOSIDES WIPI -RELATED"/>
    <property type="match status" value="1"/>
</dbReference>
<dbReference type="Pfam" id="PF21032">
    <property type="entry name" value="PROPPIN"/>
    <property type="match status" value="2"/>
</dbReference>
<dbReference type="SMART" id="SM00320">
    <property type="entry name" value="WD40"/>
    <property type="match status" value="2"/>
</dbReference>
<dbReference type="SUPFAM" id="SSF50978">
    <property type="entry name" value="WD40 repeat-like"/>
    <property type="match status" value="1"/>
</dbReference>
<accession>A7TPY4</accession>
<proteinExistence type="inferred from homology"/>
<keyword id="KW-0072">Autophagy</keyword>
<keyword id="KW-0967">Endosome</keyword>
<keyword id="KW-0472">Membrane</keyword>
<keyword id="KW-0653">Protein transport</keyword>
<keyword id="KW-1185">Reference proteome</keyword>
<keyword id="KW-0677">Repeat</keyword>
<keyword id="KW-0813">Transport</keyword>
<keyword id="KW-0926">Vacuole</keyword>
<keyword id="KW-0853">WD repeat</keyword>
<sequence length="558" mass="61146">MLIDYPPTINFINFNQTGSCISIATDDGFSIYNCDPFGKFYSQKNYSIVEMLFSTSLLAVVGLGDQPALSQRRLTMINTKTYSIICEVTFPSAILSVKMNKSRLVVLLRDQIYIYDINNMRLLHTIETTSNKLGIISISSSPSPDHNMYLAYPSPPKFINSDIKSNLTTNNISIASSSSSQVEPPLNPQQRSNFSGNTLETIQDGKSYDGSNNSNNGNNNNNNNNNNNNNNNNNNNNNNNNNNSNNEENSNSKSFQQTGITGSSNSTIMKNGDVILFDLQTLQPTMVIEAHKGPIAALTLSFDGSLLATASEKGTIIRVFNVETGAKIYQFRRGTYPTEVYSLAFSKDNQFLAATSSSKTVHIFKLGKIMETSSDDNNNNTDDDSLNAGNIDSEIVTNLSSESLTESQSKDPHVDTSRSTVGRMIRKSSQQLSRQAAKKLGQIFPLKVASILESSRHFASFKLPTTGSGGGNSTGAGGQIKSISCFGEEIELDSSEYPELFNQGQDTTSNISQSKNPKLMKMQPIRIVSSDGNYYNYILDPERGGDCLLLSQYSILTN</sequence>
<name>ATG18_VANPO</name>
<protein>
    <recommendedName>
        <fullName>Autophagy-related protein 18</fullName>
    </recommendedName>
</protein>
<reference key="1">
    <citation type="journal article" date="2007" name="Proc. Natl. Acad. Sci. U.S.A.">
        <title>Independent sorting-out of thousands of duplicated gene pairs in two yeast species descended from a whole-genome duplication.</title>
        <authorList>
            <person name="Scannell D.R."/>
            <person name="Frank A.C."/>
            <person name="Conant G.C."/>
            <person name="Byrne K.P."/>
            <person name="Woolfit M."/>
            <person name="Wolfe K.H."/>
        </authorList>
    </citation>
    <scope>NUCLEOTIDE SEQUENCE [LARGE SCALE GENOMIC DNA]</scope>
    <source>
        <strain>ATCC 22028 / DSM 70294 / BCRC 21397 / CBS 2163 / NBRC 10782 / NRRL Y-8283 / UCD 57-17</strain>
    </source>
</reference>
<gene>
    <name type="primary">ATG18</name>
    <name type="ORF">Kpol_1008p20</name>
</gene>
<evidence type="ECO:0000250" key="1"/>
<evidence type="ECO:0000250" key="2">
    <source>
        <dbReference type="UniProtKB" id="P43601"/>
    </source>
</evidence>
<evidence type="ECO:0000256" key="3">
    <source>
        <dbReference type="SAM" id="MobiDB-lite"/>
    </source>
</evidence>
<evidence type="ECO:0000305" key="4"/>
<organism>
    <name type="scientific">Vanderwaltozyma polyspora (strain ATCC 22028 / DSM 70294 / BCRC 21397 / CBS 2163 / NBRC 10782 / NRRL Y-8283 / UCD 57-17)</name>
    <name type="common">Kluyveromyces polysporus</name>
    <dbReference type="NCBI Taxonomy" id="436907"/>
    <lineage>
        <taxon>Eukaryota</taxon>
        <taxon>Fungi</taxon>
        <taxon>Dikarya</taxon>
        <taxon>Ascomycota</taxon>
        <taxon>Saccharomycotina</taxon>
        <taxon>Saccharomycetes</taxon>
        <taxon>Saccharomycetales</taxon>
        <taxon>Saccharomycetaceae</taxon>
        <taxon>Vanderwaltozyma</taxon>
    </lineage>
</organism>
<comment type="function">
    <text evidence="1">The PI(3,5)P2 regulatory complex regulates both the synthesis and turnover of phosphatidylinositol 3,5-bisphosphate (PtdIns(3,5)P2). Necessary for proper vacuole morphology. Plays an important role in osmotically-induced vacuole fragmentation. Required for cytoplasm to vacuole transport (Cvt) vesicle formation, pexophagy and starvation-induced autophagy. Involved in correct ATG9 trafficking to the pre-autophagosomal structure. Might also be involved in premeiotic DNA replication (By similarity).</text>
</comment>
<comment type="subunit">
    <text evidence="1">Component of the PI(3,5)P2 regulatory complex.</text>
</comment>
<comment type="subcellular location">
    <subcellularLocation>
        <location evidence="1">Preautophagosomal structure membrane</location>
        <topology evidence="1">Peripheral membrane protein</topology>
    </subcellularLocation>
    <subcellularLocation>
        <location evidence="1">Vacuole membrane</location>
        <topology evidence="1">Peripheral membrane protein</topology>
    </subcellularLocation>
    <subcellularLocation>
        <location evidence="1">Endosome membrane</location>
        <topology evidence="1">Peripheral membrane protein</topology>
    </subcellularLocation>
</comment>
<comment type="domain">
    <text evidence="1">The N-terminus might form a beta-propeller domain involved in specific binding to phosphatidylinositol 3,5-bisphosphate (PIP2), leading to the association of the protein to the membrane.</text>
</comment>
<comment type="domain">
    <text evidence="2">The L/FRRG motif is essential for the cytoplasm to vacuole transport (Cvt) pathway, for the recruitment of ATG8 and ATG16 to the PAS in nutrient-rich medium, and for its recruitment to and dissociation from the PAS under starvation conditions.</text>
</comment>
<comment type="similarity">
    <text evidence="4">Belongs to the WD repeat PROPPIN family.</text>
</comment>
<comment type="sequence caution" evidence="4">
    <conflict type="erroneous gene model prediction">
        <sequence resource="EMBL-CDS" id="EDO15682"/>
    </conflict>
</comment>
<feature type="chain" id="PRO_0000318010" description="Autophagy-related protein 18">
    <location>
        <begin position="1"/>
        <end position="558"/>
    </location>
</feature>
<feature type="repeat" description="WD 1">
    <location>
        <begin position="4"/>
        <end position="42"/>
    </location>
</feature>
<feature type="repeat" description="WD 2">
    <location>
        <begin position="290"/>
        <end position="330"/>
    </location>
</feature>
<feature type="repeat" description="WD 3">
    <location>
        <begin position="335"/>
        <end position="374"/>
    </location>
</feature>
<feature type="region of interest" description="Disordered" evidence="3">
    <location>
        <begin position="176"/>
        <end position="264"/>
    </location>
</feature>
<feature type="region of interest" description="Disordered" evidence="3">
    <location>
        <begin position="400"/>
        <end position="432"/>
    </location>
</feature>
<feature type="short sequence motif" description="L/FRRG motif" evidence="2">
    <location>
        <begin position="331"/>
        <end position="335"/>
    </location>
</feature>
<feature type="compositionally biased region" description="Polar residues" evidence="3">
    <location>
        <begin position="188"/>
        <end position="201"/>
    </location>
</feature>
<feature type="compositionally biased region" description="Low complexity" evidence="3">
    <location>
        <begin position="210"/>
        <end position="252"/>
    </location>
</feature>
<feature type="compositionally biased region" description="Polar residues" evidence="3">
    <location>
        <begin position="253"/>
        <end position="264"/>
    </location>
</feature>